<name>GUN2_HYPJR</name>
<evidence type="ECO:0000250" key="1">
    <source>
        <dbReference type="UniProtKB" id="P07982"/>
    </source>
</evidence>
<evidence type="ECO:0000255" key="2"/>
<evidence type="ECO:0000255" key="3">
    <source>
        <dbReference type="PROSITE-ProRule" id="PRU00597"/>
    </source>
</evidence>
<evidence type="ECO:0000256" key="4">
    <source>
        <dbReference type="SAM" id="MobiDB-lite"/>
    </source>
</evidence>
<evidence type="ECO:0000269" key="5">
    <source>
    </source>
</evidence>
<evidence type="ECO:0000305" key="6"/>
<comment type="function">
    <text evidence="1">Endoglucanase (EG) that cleaves the internal beta-1,4-glucosidic bonds in cellulose. The degradation of cellulose involves an interplay between different cellulolytic enzymes. Hydrolysis starts with EGs, which cut internal glycosidic linkages to reduce the polymerization degree of the substrate and creates new chain ends for exocellobiohydrolases (CBHs). The CBH release the disaccharide cellobiose from the non-reducing end of the cellulose polymer chain. Finally, beta-1,4-glucosidases hydrolyze the cellobiose and other short cello-oligosaccharides into glucose units.</text>
</comment>
<comment type="catalytic activity">
    <reaction evidence="1">
        <text>Endohydrolysis of (1-&gt;4)-beta-D-glucosidic linkages in cellulose, lichenin and cereal beta-D-glucans.</text>
        <dbReference type="EC" id="3.2.1.4"/>
    </reaction>
</comment>
<comment type="subcellular location">
    <subcellularLocation>
        <location evidence="1">Secreted</location>
    </subcellularLocation>
</comment>
<comment type="domain">
    <text evidence="1">The enzyme consists of two functional domains, a catalytic core joined to a carbohydrate-binding domain (CBM) by a serine-, threonine-, and proline-rich, highly glycosylated linker sequence.</text>
</comment>
<comment type="similarity">
    <text evidence="6">Belongs to the glycosyl hydrolase 5 (cellulase A) family.</text>
</comment>
<protein>
    <recommendedName>
        <fullName>Endoglucanase EG-II</fullName>
        <shortName>EGII</shortName>
        <ecNumber evidence="1">3.2.1.4</ecNumber>
    </recommendedName>
    <alternativeName>
        <fullName>Cellulase</fullName>
    </alternativeName>
    <alternativeName>
        <fullName>Endo-1,4-beta-glucanase</fullName>
    </alternativeName>
</protein>
<proteinExistence type="evidence at protein level"/>
<sequence length="418" mass="44155">MNKSVAPLLLAASILYGGAAAQQTVWGQCGGIGWSGPTNCAPGSACSTLNPYYAQCIPGATTITTSTRPPSGPTTTTRATSTSSSTPPTSSGVRFAGVNIAGFDFGCTTDGTCVTSKVYPPLKNFTGSNNYPDGIGQMQHFVNDDGMTIFRLPVGWQYLVNNNLGGNLDSTSISKYDQLVQGCLSLGAYCIVDIHNYARWNGGIIGQGGPTNAQFTSLWSQLASKYASQSRVWFGIMNEPHDVNINTWAATVQEVVTAIRNAGATSQFISLPGNDWQSAGAFISDGSAAALSQVTNPDGSTTNLIFDVHKYLDSDNSGTHAECTTNNIDGAFSPLATWLRQNNRQAILTETGGGNVQSCIQDMCQQIQYLNQNSDVYLGYVGWGAGSFDSTYVLTETPTGSGNSWTDTSLVSSCLARK</sequence>
<gene>
    <name type="primary">egl2</name>
    <name type="ORF">M419DRAFT_72489</name>
</gene>
<reference key="1">
    <citation type="journal article" date="2013" name="Ind. Biotechnol.">
        <title>Comparative genomics analysis of Trichoderma reesei strains.</title>
        <authorList>
            <person name="Koike H."/>
            <person name="Aerts A."/>
            <person name="LaButti K."/>
            <person name="Grigoriev I.V."/>
            <person name="Baker S.E."/>
        </authorList>
    </citation>
    <scope>NUCLEOTIDE SEQUENCE [LARGE SCALE GENOMIC DNA]</scope>
    <source>
        <strain>ATCC 56765 / BCRC 32924 / NRRL 11460 / Rut C-30</strain>
    </source>
</reference>
<reference key="2">
    <citation type="journal article" date="2002" name="Glycobiology">
        <title>Identification of glycan structure and glycosylation sites in cellobiohydrolase II and endoglucanases I and II from Trichoderma reesei.</title>
        <authorList>
            <person name="Hui J.P."/>
            <person name="White T.C."/>
            <person name="Thibault P."/>
        </authorList>
    </citation>
    <scope>GLYCOSYLATION AT ASN-124</scope>
    <source>
        <strain>ATCC 56765 / BCRC 32924 / NRRL 11460 / Rut C-30</strain>
    </source>
</reference>
<accession>A0A024SH20</accession>
<feature type="signal peptide" evidence="2">
    <location>
        <begin position="1"/>
        <end position="21"/>
    </location>
</feature>
<feature type="chain" id="PRO_5001537231" description="Endoglucanase EG-II">
    <location>
        <begin position="22"/>
        <end position="418"/>
    </location>
</feature>
<feature type="domain" description="CBM1" evidence="3">
    <location>
        <begin position="22"/>
        <end position="57"/>
    </location>
</feature>
<feature type="region of interest" description="Linker" evidence="1">
    <location>
        <begin position="58"/>
        <end position="91"/>
    </location>
</feature>
<feature type="region of interest" description="Disordered" evidence="4">
    <location>
        <begin position="63"/>
        <end position="91"/>
    </location>
</feature>
<feature type="region of interest" description="Catalytic" evidence="1">
    <location>
        <begin position="92"/>
        <end position="418"/>
    </location>
</feature>
<feature type="active site" description="Proton donor/acceptor" evidence="1">
    <location>
        <position position="239"/>
    </location>
</feature>
<feature type="active site" description="Nucleophile" evidence="1">
    <location>
        <position position="350"/>
    </location>
</feature>
<feature type="modified residue" description="Pyrrolidone carboxylic acid" evidence="1">
    <location>
        <position position="22"/>
    </location>
</feature>
<feature type="glycosylation site" description="N-linked (GlcNAc) asparagine" evidence="5">
    <location>
        <position position="124"/>
    </location>
</feature>
<feature type="disulfide bond" evidence="1">
    <location>
        <begin position="107"/>
        <end position="113"/>
    </location>
</feature>
<feature type="disulfide bond" evidence="1">
    <location>
        <begin position="183"/>
        <end position="190"/>
    </location>
</feature>
<feature type="disulfide bond" evidence="1">
    <location>
        <begin position="323"/>
        <end position="359"/>
    </location>
</feature>
<feature type="disulfide bond" evidence="1">
    <location>
        <begin position="364"/>
        <end position="414"/>
    </location>
</feature>
<organism>
    <name type="scientific">Hypocrea jecorina (strain ATCC 56765 / BCRC 32924 / NRRL 11460 / Rut C-30)</name>
    <name type="common">Trichoderma reesei</name>
    <dbReference type="NCBI Taxonomy" id="1344414"/>
    <lineage>
        <taxon>Eukaryota</taxon>
        <taxon>Fungi</taxon>
        <taxon>Dikarya</taxon>
        <taxon>Ascomycota</taxon>
        <taxon>Pezizomycotina</taxon>
        <taxon>Sordariomycetes</taxon>
        <taxon>Hypocreomycetidae</taxon>
        <taxon>Hypocreales</taxon>
        <taxon>Hypocreaceae</taxon>
        <taxon>Trichoderma</taxon>
    </lineage>
</organism>
<keyword id="KW-0119">Carbohydrate metabolism</keyword>
<keyword id="KW-0136">Cellulose degradation</keyword>
<keyword id="KW-1015">Disulfide bond</keyword>
<keyword id="KW-0325">Glycoprotein</keyword>
<keyword id="KW-0326">Glycosidase</keyword>
<keyword id="KW-0378">Hydrolase</keyword>
<keyword id="KW-0624">Polysaccharide degradation</keyword>
<keyword id="KW-0873">Pyrrolidone carboxylic acid</keyword>
<keyword id="KW-0964">Secreted</keyword>
<keyword id="KW-0732">Signal</keyword>
<dbReference type="EC" id="3.2.1.4" evidence="1"/>
<dbReference type="EMBL" id="KI911141">
    <property type="protein sequence ID" value="ETS04885.1"/>
    <property type="molecule type" value="Genomic_DNA"/>
</dbReference>
<dbReference type="SMR" id="A0A024SH20"/>
<dbReference type="GlyCosmos" id="A0A024SH20">
    <property type="glycosylation" value="1 site, No reported glycans"/>
</dbReference>
<dbReference type="iPTMnet" id="A0A024SH20"/>
<dbReference type="KEGG" id="trr:M419DRAFT_72489"/>
<dbReference type="HOGENOM" id="CLU_029718_1_1_1"/>
<dbReference type="OrthoDB" id="13585at5129"/>
<dbReference type="Proteomes" id="UP000024376">
    <property type="component" value="Unassembled WGS sequence"/>
</dbReference>
<dbReference type="GO" id="GO:0005576">
    <property type="term" value="C:extracellular region"/>
    <property type="evidence" value="ECO:0007669"/>
    <property type="project" value="UniProtKB-SubCell"/>
</dbReference>
<dbReference type="GO" id="GO:0008810">
    <property type="term" value="F:cellulase activity"/>
    <property type="evidence" value="ECO:0007669"/>
    <property type="project" value="UniProtKB-EC"/>
</dbReference>
<dbReference type="GO" id="GO:0030248">
    <property type="term" value="F:cellulose binding"/>
    <property type="evidence" value="ECO:0007669"/>
    <property type="project" value="InterPro"/>
</dbReference>
<dbReference type="GO" id="GO:0030245">
    <property type="term" value="P:cellulose catabolic process"/>
    <property type="evidence" value="ECO:0007669"/>
    <property type="project" value="UniProtKB-KW"/>
</dbReference>
<dbReference type="FunFam" id="3.20.20.80:FF:000124">
    <property type="entry name" value="Exported cellulase"/>
    <property type="match status" value="1"/>
</dbReference>
<dbReference type="Gene3D" id="3.20.20.80">
    <property type="entry name" value="Glycosidases"/>
    <property type="match status" value="1"/>
</dbReference>
<dbReference type="InterPro" id="IPR035971">
    <property type="entry name" value="CBD_sf"/>
</dbReference>
<dbReference type="InterPro" id="IPR000254">
    <property type="entry name" value="Cellulose-bd_dom_fun"/>
</dbReference>
<dbReference type="InterPro" id="IPR001547">
    <property type="entry name" value="Glyco_hydro_5"/>
</dbReference>
<dbReference type="InterPro" id="IPR018087">
    <property type="entry name" value="Glyco_hydro_5_CS"/>
</dbReference>
<dbReference type="InterPro" id="IPR017853">
    <property type="entry name" value="Glycoside_hydrolase_SF"/>
</dbReference>
<dbReference type="PANTHER" id="PTHR34142:SF5">
    <property type="entry name" value="CBM1 DOMAIN-CONTAINING PROTEIN"/>
    <property type="match status" value="1"/>
</dbReference>
<dbReference type="PANTHER" id="PTHR34142">
    <property type="entry name" value="ENDO-BETA-1,4-GLUCANASE A"/>
    <property type="match status" value="1"/>
</dbReference>
<dbReference type="Pfam" id="PF00734">
    <property type="entry name" value="CBM_1"/>
    <property type="match status" value="1"/>
</dbReference>
<dbReference type="Pfam" id="PF00150">
    <property type="entry name" value="Cellulase"/>
    <property type="match status" value="1"/>
</dbReference>
<dbReference type="SMART" id="SM00236">
    <property type="entry name" value="fCBD"/>
    <property type="match status" value="1"/>
</dbReference>
<dbReference type="SUPFAM" id="SSF51445">
    <property type="entry name" value="(Trans)glycosidases"/>
    <property type="match status" value="1"/>
</dbReference>
<dbReference type="SUPFAM" id="SSF57180">
    <property type="entry name" value="Cellulose-binding domain"/>
    <property type="match status" value="1"/>
</dbReference>
<dbReference type="PROSITE" id="PS00562">
    <property type="entry name" value="CBM1_1"/>
    <property type="match status" value="1"/>
</dbReference>
<dbReference type="PROSITE" id="PS51164">
    <property type="entry name" value="CBM1_2"/>
    <property type="match status" value="1"/>
</dbReference>
<dbReference type="PROSITE" id="PS00659">
    <property type="entry name" value="GLYCOSYL_HYDROL_F5"/>
    <property type="match status" value="1"/>
</dbReference>